<reference key="1">
    <citation type="journal article" date="2001" name="J. Bacteriol.">
        <title>Genome sequence and comparative analysis of the solvent-producing bacterium Clostridium acetobutylicum.</title>
        <authorList>
            <person name="Noelling J."/>
            <person name="Breton G."/>
            <person name="Omelchenko M.V."/>
            <person name="Makarova K.S."/>
            <person name="Zeng Q."/>
            <person name="Gibson R."/>
            <person name="Lee H.M."/>
            <person name="Dubois J."/>
            <person name="Qiu D."/>
            <person name="Hitti J."/>
            <person name="Wolf Y.I."/>
            <person name="Tatusov R.L."/>
            <person name="Sabathe F."/>
            <person name="Doucette-Stamm L.A."/>
            <person name="Soucaille P."/>
            <person name="Daly M.J."/>
            <person name="Bennett G.N."/>
            <person name="Koonin E.V."/>
            <person name="Smith D.R."/>
        </authorList>
    </citation>
    <scope>NUCLEOTIDE SEQUENCE [LARGE SCALE GENOMIC DNA]</scope>
    <source>
        <strain>ATCC 824 / DSM 792 / JCM 1419 / IAM 19013 / LMG 5710 / NBRC 13948 / NRRL B-527 / VKM B-1787 / 2291 / W</strain>
    </source>
</reference>
<comment type="function">
    <text evidence="1">Small subunit of the glutamine-dependent carbamoyl phosphate synthetase (CPSase). CPSase catalyzes the formation of carbamoyl phosphate from the ammonia moiety of glutamine, carbonate, and phosphate donated by ATP, constituting the first step of 2 biosynthetic pathways, one leading to arginine and/or urea and the other to pyrimidine nucleotides. The small subunit (glutamine amidotransferase) binds and cleaves glutamine to supply the large subunit with the substrate ammonia.</text>
</comment>
<comment type="catalytic activity">
    <reaction evidence="1">
        <text>hydrogencarbonate + L-glutamine + 2 ATP + H2O = carbamoyl phosphate + L-glutamate + 2 ADP + phosphate + 2 H(+)</text>
        <dbReference type="Rhea" id="RHEA:18633"/>
        <dbReference type="ChEBI" id="CHEBI:15377"/>
        <dbReference type="ChEBI" id="CHEBI:15378"/>
        <dbReference type="ChEBI" id="CHEBI:17544"/>
        <dbReference type="ChEBI" id="CHEBI:29985"/>
        <dbReference type="ChEBI" id="CHEBI:30616"/>
        <dbReference type="ChEBI" id="CHEBI:43474"/>
        <dbReference type="ChEBI" id="CHEBI:58228"/>
        <dbReference type="ChEBI" id="CHEBI:58359"/>
        <dbReference type="ChEBI" id="CHEBI:456216"/>
        <dbReference type="EC" id="6.3.5.5"/>
    </reaction>
</comment>
<comment type="catalytic activity">
    <molecule>Carbamoyl phosphate synthase small chain</molecule>
    <reaction evidence="1">
        <text>L-glutamine + H2O = L-glutamate + NH4(+)</text>
        <dbReference type="Rhea" id="RHEA:15889"/>
        <dbReference type="ChEBI" id="CHEBI:15377"/>
        <dbReference type="ChEBI" id="CHEBI:28938"/>
        <dbReference type="ChEBI" id="CHEBI:29985"/>
        <dbReference type="ChEBI" id="CHEBI:58359"/>
    </reaction>
</comment>
<comment type="pathway">
    <text evidence="1">Amino-acid biosynthesis; L-arginine biosynthesis; carbamoyl phosphate from bicarbonate: step 1/1.</text>
</comment>
<comment type="pathway">
    <text evidence="1">Pyrimidine metabolism; UMP biosynthesis via de novo pathway; (S)-dihydroorotate from bicarbonate: step 1/3.</text>
</comment>
<comment type="subunit">
    <text evidence="1">Composed of two chains; the small (or glutamine) chain promotes the hydrolysis of glutamine to ammonia, which is used by the large (or ammonia) chain to synthesize carbamoyl phosphate. Tetramer of heterodimers (alpha,beta)4.</text>
</comment>
<comment type="similarity">
    <text evidence="1">Belongs to the CarA family.</text>
</comment>
<accession>Q97FT2</accession>
<gene>
    <name evidence="1" type="primary">carA</name>
    <name type="ordered locus">CA_C2645</name>
</gene>
<protein>
    <recommendedName>
        <fullName evidence="1">Carbamoyl phosphate synthase small chain</fullName>
        <ecNumber evidence="1">6.3.5.5</ecNumber>
    </recommendedName>
    <alternativeName>
        <fullName evidence="1">Carbamoyl phosphate synthetase glutamine chain</fullName>
    </alternativeName>
</protein>
<keyword id="KW-0028">Amino-acid biosynthesis</keyword>
<keyword id="KW-0055">Arginine biosynthesis</keyword>
<keyword id="KW-0067">ATP-binding</keyword>
<keyword id="KW-0315">Glutamine amidotransferase</keyword>
<keyword id="KW-0436">Ligase</keyword>
<keyword id="KW-0547">Nucleotide-binding</keyword>
<keyword id="KW-0665">Pyrimidine biosynthesis</keyword>
<keyword id="KW-1185">Reference proteome</keyword>
<evidence type="ECO:0000255" key="1">
    <source>
        <dbReference type="HAMAP-Rule" id="MF_01209"/>
    </source>
</evidence>
<name>CARA_CLOAB</name>
<organism>
    <name type="scientific">Clostridium acetobutylicum (strain ATCC 824 / DSM 792 / JCM 1419 / IAM 19013 / LMG 5710 / NBRC 13948 / NRRL B-527 / VKM B-1787 / 2291 / W)</name>
    <dbReference type="NCBI Taxonomy" id="272562"/>
    <lineage>
        <taxon>Bacteria</taxon>
        <taxon>Bacillati</taxon>
        <taxon>Bacillota</taxon>
        <taxon>Clostridia</taxon>
        <taxon>Eubacteriales</taxon>
        <taxon>Clostridiaceae</taxon>
        <taxon>Clostridium</taxon>
    </lineage>
</organism>
<proteinExistence type="inferred from homology"/>
<dbReference type="EC" id="6.3.5.5" evidence="1"/>
<dbReference type="EMBL" id="AE001437">
    <property type="protein sequence ID" value="AAK80592.1"/>
    <property type="molecule type" value="Genomic_DNA"/>
</dbReference>
<dbReference type="PIR" id="E97225">
    <property type="entry name" value="E97225"/>
</dbReference>
<dbReference type="RefSeq" id="NP_349252.1">
    <property type="nucleotide sequence ID" value="NC_003030.1"/>
</dbReference>
<dbReference type="RefSeq" id="WP_010965933.1">
    <property type="nucleotide sequence ID" value="NC_003030.1"/>
</dbReference>
<dbReference type="SMR" id="Q97FT2"/>
<dbReference type="STRING" id="272562.CA_C2645"/>
<dbReference type="KEGG" id="cac:CA_C2645"/>
<dbReference type="PATRIC" id="fig|272562.8.peg.2834"/>
<dbReference type="eggNOG" id="COG0505">
    <property type="taxonomic scope" value="Bacteria"/>
</dbReference>
<dbReference type="HOGENOM" id="CLU_035901_2_1_9"/>
<dbReference type="OrthoDB" id="9804328at2"/>
<dbReference type="UniPathway" id="UPA00068">
    <property type="reaction ID" value="UER00171"/>
</dbReference>
<dbReference type="UniPathway" id="UPA00070">
    <property type="reaction ID" value="UER00115"/>
</dbReference>
<dbReference type="Proteomes" id="UP000000814">
    <property type="component" value="Chromosome"/>
</dbReference>
<dbReference type="GO" id="GO:0005524">
    <property type="term" value="F:ATP binding"/>
    <property type="evidence" value="ECO:0007669"/>
    <property type="project" value="UniProtKB-UniRule"/>
</dbReference>
<dbReference type="GO" id="GO:0004088">
    <property type="term" value="F:carbamoyl-phosphate synthase (glutamine-hydrolyzing) activity"/>
    <property type="evidence" value="ECO:0007669"/>
    <property type="project" value="UniProtKB-UniRule"/>
</dbReference>
<dbReference type="GO" id="GO:0004359">
    <property type="term" value="F:glutaminase activity"/>
    <property type="evidence" value="ECO:0007669"/>
    <property type="project" value="RHEA"/>
</dbReference>
<dbReference type="GO" id="GO:0006207">
    <property type="term" value="P:'de novo' pyrimidine nucleobase biosynthetic process"/>
    <property type="evidence" value="ECO:0007669"/>
    <property type="project" value="InterPro"/>
</dbReference>
<dbReference type="GO" id="GO:0044205">
    <property type="term" value="P:'de novo' UMP biosynthetic process"/>
    <property type="evidence" value="ECO:0007669"/>
    <property type="project" value="UniProtKB-UniRule"/>
</dbReference>
<dbReference type="GO" id="GO:0006541">
    <property type="term" value="P:glutamine metabolic process"/>
    <property type="evidence" value="ECO:0007669"/>
    <property type="project" value="InterPro"/>
</dbReference>
<dbReference type="GO" id="GO:0006526">
    <property type="term" value="P:L-arginine biosynthetic process"/>
    <property type="evidence" value="ECO:0007669"/>
    <property type="project" value="UniProtKB-UniRule"/>
</dbReference>
<dbReference type="CDD" id="cd01744">
    <property type="entry name" value="GATase1_CPSase"/>
    <property type="match status" value="1"/>
</dbReference>
<dbReference type="FunFam" id="3.50.30.20:FF:000001">
    <property type="entry name" value="Carbamoyl-phosphate synthase small chain"/>
    <property type="match status" value="1"/>
</dbReference>
<dbReference type="Gene3D" id="3.40.50.880">
    <property type="match status" value="1"/>
</dbReference>
<dbReference type="Gene3D" id="3.50.30.20">
    <property type="entry name" value="Carbamoyl-phosphate synthase small subunit, N-terminal domain"/>
    <property type="match status" value="1"/>
</dbReference>
<dbReference type="HAMAP" id="MF_01209">
    <property type="entry name" value="CPSase_S_chain"/>
    <property type="match status" value="1"/>
</dbReference>
<dbReference type="InterPro" id="IPR050472">
    <property type="entry name" value="Anth_synth/Amidotransfase"/>
</dbReference>
<dbReference type="InterPro" id="IPR006274">
    <property type="entry name" value="CarbamoylP_synth_ssu"/>
</dbReference>
<dbReference type="InterPro" id="IPR002474">
    <property type="entry name" value="CarbamoylP_synth_ssu_N"/>
</dbReference>
<dbReference type="InterPro" id="IPR036480">
    <property type="entry name" value="CarbP_synth_ssu_N_sf"/>
</dbReference>
<dbReference type="InterPro" id="IPR029062">
    <property type="entry name" value="Class_I_gatase-like"/>
</dbReference>
<dbReference type="InterPro" id="IPR035686">
    <property type="entry name" value="CPSase_GATase1"/>
</dbReference>
<dbReference type="InterPro" id="IPR017926">
    <property type="entry name" value="GATASE"/>
</dbReference>
<dbReference type="NCBIfam" id="TIGR01368">
    <property type="entry name" value="CPSaseIIsmall"/>
    <property type="match status" value="1"/>
</dbReference>
<dbReference type="NCBIfam" id="NF009475">
    <property type="entry name" value="PRK12838.1"/>
    <property type="match status" value="1"/>
</dbReference>
<dbReference type="PANTHER" id="PTHR43418:SF7">
    <property type="entry name" value="CARBAMOYL-PHOSPHATE SYNTHASE SMALL CHAIN"/>
    <property type="match status" value="1"/>
</dbReference>
<dbReference type="PANTHER" id="PTHR43418">
    <property type="entry name" value="MULTIFUNCTIONAL TRYPTOPHAN BIOSYNTHESIS PROTEIN-RELATED"/>
    <property type="match status" value="1"/>
</dbReference>
<dbReference type="Pfam" id="PF00988">
    <property type="entry name" value="CPSase_sm_chain"/>
    <property type="match status" value="1"/>
</dbReference>
<dbReference type="Pfam" id="PF00117">
    <property type="entry name" value="GATase"/>
    <property type="match status" value="1"/>
</dbReference>
<dbReference type="PRINTS" id="PR00097">
    <property type="entry name" value="ANTSNTHASEII"/>
</dbReference>
<dbReference type="PRINTS" id="PR00099">
    <property type="entry name" value="CPSGATASE"/>
</dbReference>
<dbReference type="PRINTS" id="PR00096">
    <property type="entry name" value="GATASE"/>
</dbReference>
<dbReference type="SMART" id="SM01097">
    <property type="entry name" value="CPSase_sm_chain"/>
    <property type="match status" value="1"/>
</dbReference>
<dbReference type="SUPFAM" id="SSF52021">
    <property type="entry name" value="Carbamoyl phosphate synthetase, small subunit N-terminal domain"/>
    <property type="match status" value="1"/>
</dbReference>
<dbReference type="SUPFAM" id="SSF52317">
    <property type="entry name" value="Class I glutamine amidotransferase-like"/>
    <property type="match status" value="1"/>
</dbReference>
<dbReference type="PROSITE" id="PS51273">
    <property type="entry name" value="GATASE_TYPE_1"/>
    <property type="match status" value="1"/>
</dbReference>
<sequence length="351" mass="38836">MKGIIYLEDGTVFYGTGFGKEGNEFGEIVFNTSMTGYQEILTDPSYAGQIINMTYPLIGNYGVNESVNQSKCVYAKGFIVKNIDENPSNYTSEINIDQMLKNMGVVGVFGVDTRSITKKIRSYGTMKCIISNGELSIEELKKMMDASNIVDDYVNTVSTKEIIHIAGNGNKVAVMDFGIKNDIIENLKERQCDITIFPYDTDYNEILNINPDGIFLSNGPGDPKSIPEAIENVKKLIGKRPMFGICLGHQIIALASGGNTYKLKYGHRGGNHGIYDVQRDKAYITAQNHGYAVDEESVLENGMIITHRNLNDGTVEGMKHKSIPLFSVQFHPEGAPGPTDTTYLFDQFVNL</sequence>
<feature type="chain" id="PRO_0000112267" description="Carbamoyl phosphate synthase small chain">
    <location>
        <begin position="1"/>
        <end position="351"/>
    </location>
</feature>
<feature type="domain" description="Glutamine amidotransferase type-1" evidence="1">
    <location>
        <begin position="171"/>
        <end position="351"/>
    </location>
</feature>
<feature type="region of interest" description="CPSase" evidence="1">
    <location>
        <begin position="1"/>
        <end position="171"/>
    </location>
</feature>
<feature type="active site" description="Nucleophile" evidence="1">
    <location>
        <position position="246"/>
    </location>
</feature>
<feature type="active site" evidence="1">
    <location>
        <position position="331"/>
    </location>
</feature>
<feature type="active site" evidence="1">
    <location>
        <position position="333"/>
    </location>
</feature>
<feature type="binding site" evidence="1">
    <location>
        <position position="45"/>
    </location>
    <ligand>
        <name>L-glutamine</name>
        <dbReference type="ChEBI" id="CHEBI:58359"/>
    </ligand>
</feature>
<feature type="binding site" evidence="1">
    <location>
        <position position="219"/>
    </location>
    <ligand>
        <name>L-glutamine</name>
        <dbReference type="ChEBI" id="CHEBI:58359"/>
    </ligand>
</feature>
<feature type="binding site" evidence="1">
    <location>
        <position position="221"/>
    </location>
    <ligand>
        <name>L-glutamine</name>
        <dbReference type="ChEBI" id="CHEBI:58359"/>
    </ligand>
</feature>
<feature type="binding site" evidence="1">
    <location>
        <position position="247"/>
    </location>
    <ligand>
        <name>L-glutamine</name>
        <dbReference type="ChEBI" id="CHEBI:58359"/>
    </ligand>
</feature>
<feature type="binding site" evidence="1">
    <location>
        <position position="250"/>
    </location>
    <ligand>
        <name>L-glutamine</name>
        <dbReference type="ChEBI" id="CHEBI:58359"/>
    </ligand>
</feature>
<feature type="binding site" evidence="1">
    <location>
        <position position="288"/>
    </location>
    <ligand>
        <name>L-glutamine</name>
        <dbReference type="ChEBI" id="CHEBI:58359"/>
    </ligand>
</feature>
<feature type="binding site" evidence="1">
    <location>
        <position position="290"/>
    </location>
    <ligand>
        <name>L-glutamine</name>
        <dbReference type="ChEBI" id="CHEBI:58359"/>
    </ligand>
</feature>
<feature type="binding site" evidence="1">
    <location>
        <position position="291"/>
    </location>
    <ligand>
        <name>L-glutamine</name>
        <dbReference type="ChEBI" id="CHEBI:58359"/>
    </ligand>
</feature>